<feature type="chain" id="PRO_1000188958" description="G/U mismatch-specific DNA glycosylase">
    <location>
        <begin position="1"/>
        <end position="168"/>
    </location>
</feature>
<sequence>MVEDILAPGLRVVFCGINPGLSSAGTGFPFAHPANRFWKVIYQAGFTDRQLKPQEAQHLLDYRCGVTKLVDRPTVQANEVSKQELHAGGRKLIEKIEDYQPQALAILGKQAYEQGFSQRGAQWGKQTLTIGSTQIWVLPNPSGLSRVSLEKLVEAYRELDQALVVRGR</sequence>
<organism>
    <name type="scientific">Escherichia coli (strain SE11)</name>
    <dbReference type="NCBI Taxonomy" id="409438"/>
    <lineage>
        <taxon>Bacteria</taxon>
        <taxon>Pseudomonadati</taxon>
        <taxon>Pseudomonadota</taxon>
        <taxon>Gammaproteobacteria</taxon>
        <taxon>Enterobacterales</taxon>
        <taxon>Enterobacteriaceae</taxon>
        <taxon>Escherichia</taxon>
    </lineage>
</organism>
<proteinExistence type="inferred from homology"/>
<evidence type="ECO:0000255" key="1">
    <source>
        <dbReference type="HAMAP-Rule" id="MF_01956"/>
    </source>
</evidence>
<name>MUG_ECOSE</name>
<keyword id="KW-0963">Cytoplasm</keyword>
<keyword id="KW-0227">DNA damage</keyword>
<keyword id="KW-0228">DNA excision</keyword>
<keyword id="KW-0234">DNA repair</keyword>
<keyword id="KW-0238">DNA-binding</keyword>
<keyword id="KW-0378">Hydrolase</keyword>
<accession>B6I441</accession>
<comment type="function">
    <text evidence="1">Excises ethenocytosine and uracil, which can arise by alkylation or deamination of cytosine, respectively, from the corresponding mispairs with guanine in ds-DNA. It is capable of hydrolyzing the carbon-nitrogen bond between the sugar-phosphate backbone of the DNA and the mispaired base. The complementary strand guanine functions in substrate recognition. Required for DNA damage lesion repair in stationary-phase cells.</text>
</comment>
<comment type="catalytic activity">
    <reaction evidence="1">
        <text>Specifically hydrolyzes mismatched double-stranded DNA and polynucleotides, releasing free uracil.</text>
        <dbReference type="EC" id="3.2.2.28"/>
    </reaction>
</comment>
<comment type="subunit">
    <text evidence="1">Binds DNA as a monomer.</text>
</comment>
<comment type="subcellular location">
    <subcellularLocation>
        <location evidence="1">Cytoplasm</location>
    </subcellularLocation>
</comment>
<comment type="similarity">
    <text evidence="1">Belongs to the uracil-DNA glycosylase (UDG) superfamily. TDG/mug family.</text>
</comment>
<protein>
    <recommendedName>
        <fullName evidence="1">G/U mismatch-specific DNA glycosylase</fullName>
        <ecNumber evidence="1">3.2.2.28</ecNumber>
    </recommendedName>
    <alternativeName>
        <fullName evidence="1">Double-strand-specific uracil glycosylase</fullName>
    </alternativeName>
    <alternativeName>
        <fullName evidence="1">Mismatch-specific uracil DNA-glycosylase</fullName>
        <shortName evidence="1">MUG</shortName>
    </alternativeName>
</protein>
<dbReference type="EC" id="3.2.2.28" evidence="1"/>
<dbReference type="EMBL" id="AP009240">
    <property type="protein sequence ID" value="BAG78874.1"/>
    <property type="molecule type" value="Genomic_DNA"/>
</dbReference>
<dbReference type="RefSeq" id="WP_000228937.1">
    <property type="nucleotide sequence ID" value="NC_011415.1"/>
</dbReference>
<dbReference type="SMR" id="B6I441"/>
<dbReference type="GeneID" id="93778924"/>
<dbReference type="KEGG" id="ecy:ECSE_3350"/>
<dbReference type="HOGENOM" id="CLU_042829_3_1_6"/>
<dbReference type="Proteomes" id="UP000008199">
    <property type="component" value="Chromosome"/>
</dbReference>
<dbReference type="GO" id="GO:0005737">
    <property type="term" value="C:cytoplasm"/>
    <property type="evidence" value="ECO:0007669"/>
    <property type="project" value="UniProtKB-SubCell"/>
</dbReference>
<dbReference type="GO" id="GO:0003677">
    <property type="term" value="F:DNA binding"/>
    <property type="evidence" value="ECO:0007669"/>
    <property type="project" value="UniProtKB-KW"/>
</dbReference>
<dbReference type="GO" id="GO:0008263">
    <property type="term" value="F:pyrimidine-specific mismatch base pair DNA N-glycosylase activity"/>
    <property type="evidence" value="ECO:0007669"/>
    <property type="project" value="UniProtKB-UniRule"/>
</dbReference>
<dbReference type="GO" id="GO:0004844">
    <property type="term" value="F:uracil DNA N-glycosylase activity"/>
    <property type="evidence" value="ECO:0007669"/>
    <property type="project" value="TreeGrafter"/>
</dbReference>
<dbReference type="GO" id="GO:0006285">
    <property type="term" value="P:base-excision repair, AP site formation"/>
    <property type="evidence" value="ECO:0007669"/>
    <property type="project" value="UniProtKB-UniRule"/>
</dbReference>
<dbReference type="CDD" id="cd10028">
    <property type="entry name" value="UDG-F2_TDG_MUG"/>
    <property type="match status" value="1"/>
</dbReference>
<dbReference type="FunFam" id="3.40.470.10:FF:000003">
    <property type="entry name" value="G/U mismatch-specific DNA glycosylase"/>
    <property type="match status" value="1"/>
</dbReference>
<dbReference type="Gene3D" id="3.40.470.10">
    <property type="entry name" value="Uracil-DNA glycosylase-like domain"/>
    <property type="match status" value="1"/>
</dbReference>
<dbReference type="HAMAP" id="MF_01956">
    <property type="entry name" value="MUG"/>
    <property type="match status" value="1"/>
</dbReference>
<dbReference type="InterPro" id="IPR015637">
    <property type="entry name" value="MUG/TDG"/>
</dbReference>
<dbReference type="InterPro" id="IPR023502">
    <property type="entry name" value="MUG_bact"/>
</dbReference>
<dbReference type="InterPro" id="IPR005122">
    <property type="entry name" value="Uracil-DNA_glycosylase-like"/>
</dbReference>
<dbReference type="InterPro" id="IPR036895">
    <property type="entry name" value="Uracil-DNA_glycosylase-like_sf"/>
</dbReference>
<dbReference type="NCBIfam" id="NF007570">
    <property type="entry name" value="PRK10201.1"/>
    <property type="match status" value="1"/>
</dbReference>
<dbReference type="PANTHER" id="PTHR12159">
    <property type="entry name" value="G/T AND G/U MISMATCH-SPECIFIC DNA GLYCOSYLASE"/>
    <property type="match status" value="1"/>
</dbReference>
<dbReference type="PANTHER" id="PTHR12159:SF9">
    <property type="entry name" value="G_T MISMATCH-SPECIFIC THYMINE DNA GLYCOSYLASE"/>
    <property type="match status" value="1"/>
</dbReference>
<dbReference type="Pfam" id="PF03167">
    <property type="entry name" value="UDG"/>
    <property type="match status" value="1"/>
</dbReference>
<dbReference type="SUPFAM" id="SSF52141">
    <property type="entry name" value="Uracil-DNA glycosylase-like"/>
    <property type="match status" value="1"/>
</dbReference>
<reference key="1">
    <citation type="journal article" date="2008" name="DNA Res.">
        <title>Complete genome sequence and comparative analysis of the wild-type commensal Escherichia coli strain SE11 isolated from a healthy adult.</title>
        <authorList>
            <person name="Oshima K."/>
            <person name="Toh H."/>
            <person name="Ogura Y."/>
            <person name="Sasamoto H."/>
            <person name="Morita H."/>
            <person name="Park S.-H."/>
            <person name="Ooka T."/>
            <person name="Iyoda S."/>
            <person name="Taylor T.D."/>
            <person name="Hayashi T."/>
            <person name="Itoh K."/>
            <person name="Hattori M."/>
        </authorList>
    </citation>
    <scope>NUCLEOTIDE SEQUENCE [LARGE SCALE GENOMIC DNA]</scope>
    <source>
        <strain>SE11</strain>
    </source>
</reference>
<gene>
    <name evidence="1" type="primary">mug</name>
    <name type="ordered locus">ECSE_3350</name>
</gene>